<comment type="function">
    <text evidence="1">Catalyzes the ATP-dependent amination of UTP to CTP with either L-glutamine or ammonia as the source of nitrogen. Regulates intracellular CTP levels through interactions with the four ribonucleotide triphosphates.</text>
</comment>
<comment type="catalytic activity">
    <reaction evidence="1">
        <text>UTP + L-glutamine + ATP + H2O = CTP + L-glutamate + ADP + phosphate + 2 H(+)</text>
        <dbReference type="Rhea" id="RHEA:26426"/>
        <dbReference type="ChEBI" id="CHEBI:15377"/>
        <dbReference type="ChEBI" id="CHEBI:15378"/>
        <dbReference type="ChEBI" id="CHEBI:29985"/>
        <dbReference type="ChEBI" id="CHEBI:30616"/>
        <dbReference type="ChEBI" id="CHEBI:37563"/>
        <dbReference type="ChEBI" id="CHEBI:43474"/>
        <dbReference type="ChEBI" id="CHEBI:46398"/>
        <dbReference type="ChEBI" id="CHEBI:58359"/>
        <dbReference type="ChEBI" id="CHEBI:456216"/>
        <dbReference type="EC" id="6.3.4.2"/>
    </reaction>
</comment>
<comment type="catalytic activity">
    <reaction evidence="1">
        <text>L-glutamine + H2O = L-glutamate + NH4(+)</text>
        <dbReference type="Rhea" id="RHEA:15889"/>
        <dbReference type="ChEBI" id="CHEBI:15377"/>
        <dbReference type="ChEBI" id="CHEBI:28938"/>
        <dbReference type="ChEBI" id="CHEBI:29985"/>
        <dbReference type="ChEBI" id="CHEBI:58359"/>
    </reaction>
</comment>
<comment type="catalytic activity">
    <reaction evidence="1">
        <text>UTP + NH4(+) + ATP = CTP + ADP + phosphate + 2 H(+)</text>
        <dbReference type="Rhea" id="RHEA:16597"/>
        <dbReference type="ChEBI" id="CHEBI:15378"/>
        <dbReference type="ChEBI" id="CHEBI:28938"/>
        <dbReference type="ChEBI" id="CHEBI:30616"/>
        <dbReference type="ChEBI" id="CHEBI:37563"/>
        <dbReference type="ChEBI" id="CHEBI:43474"/>
        <dbReference type="ChEBI" id="CHEBI:46398"/>
        <dbReference type="ChEBI" id="CHEBI:456216"/>
    </reaction>
</comment>
<comment type="activity regulation">
    <text evidence="1">Allosterically activated by GTP, when glutamine is the substrate; GTP has no effect on the reaction when ammonia is the substrate. The allosteric effector GTP functions by stabilizing the protein conformation that binds the tetrahedral intermediate(s) formed during glutamine hydrolysis. Inhibited by the product CTP, via allosteric rather than competitive inhibition.</text>
</comment>
<comment type="pathway">
    <text evidence="1">Pyrimidine metabolism; CTP biosynthesis via de novo pathway; CTP from UDP: step 2/2.</text>
</comment>
<comment type="subunit">
    <text evidence="1">Homotetramer.</text>
</comment>
<comment type="miscellaneous">
    <text evidence="1">CTPSs have evolved a hybrid strategy for distinguishing between UTP and CTP. The overlapping regions of the product feedback inhibitory and substrate sites recognize a common feature in both compounds, the triphosphate moiety. To differentiate isosteric substrate and product pyrimidine rings, an additional pocket far from the expected kinase/ligase catalytic site, specifically recognizes the cytosine and ribose portions of the product inhibitor.</text>
</comment>
<comment type="similarity">
    <text evidence="1">Belongs to the CTP synthase family.</text>
</comment>
<evidence type="ECO:0000255" key="1">
    <source>
        <dbReference type="HAMAP-Rule" id="MF_01227"/>
    </source>
</evidence>
<reference key="1">
    <citation type="journal article" date="2014" name="Stand. Genomic Sci.">
        <title>Complete genome sequence of Anabaena variabilis ATCC 29413.</title>
        <authorList>
            <person name="Thiel T."/>
            <person name="Pratte B.S."/>
            <person name="Zhong J."/>
            <person name="Goodwin L."/>
            <person name="Copeland A."/>
            <person name="Lucas S."/>
            <person name="Han C."/>
            <person name="Pitluck S."/>
            <person name="Land M.L."/>
            <person name="Kyrpides N.C."/>
            <person name="Woyke T."/>
        </authorList>
    </citation>
    <scope>NUCLEOTIDE SEQUENCE [LARGE SCALE GENOMIC DNA]</scope>
    <source>
        <strain>ATCC 29413 / PCC 7937</strain>
    </source>
</reference>
<feature type="chain" id="PRO_0000266052" description="CTP synthase">
    <location>
        <begin position="1"/>
        <end position="545"/>
    </location>
</feature>
<feature type="domain" description="Glutamine amidotransferase type-1" evidence="1">
    <location>
        <begin position="292"/>
        <end position="534"/>
    </location>
</feature>
<feature type="region of interest" description="Amidoligase domain" evidence="1">
    <location>
        <begin position="1"/>
        <end position="267"/>
    </location>
</feature>
<feature type="active site" description="Nucleophile; for glutamine hydrolysis" evidence="1">
    <location>
        <position position="381"/>
    </location>
</feature>
<feature type="active site" evidence="1">
    <location>
        <position position="507"/>
    </location>
</feature>
<feature type="active site" evidence="1">
    <location>
        <position position="509"/>
    </location>
</feature>
<feature type="binding site" evidence="1">
    <location>
        <position position="13"/>
    </location>
    <ligand>
        <name>CTP</name>
        <dbReference type="ChEBI" id="CHEBI:37563"/>
        <note>allosteric inhibitor</note>
    </ligand>
</feature>
<feature type="binding site" evidence="1">
    <location>
        <position position="13"/>
    </location>
    <ligand>
        <name>UTP</name>
        <dbReference type="ChEBI" id="CHEBI:46398"/>
    </ligand>
</feature>
<feature type="binding site" evidence="1">
    <location>
        <begin position="14"/>
        <end position="19"/>
    </location>
    <ligand>
        <name>ATP</name>
        <dbReference type="ChEBI" id="CHEBI:30616"/>
    </ligand>
</feature>
<feature type="binding site" evidence="1">
    <location>
        <position position="71"/>
    </location>
    <ligand>
        <name>ATP</name>
        <dbReference type="ChEBI" id="CHEBI:30616"/>
    </ligand>
</feature>
<feature type="binding site" evidence="1">
    <location>
        <position position="71"/>
    </location>
    <ligand>
        <name>Mg(2+)</name>
        <dbReference type="ChEBI" id="CHEBI:18420"/>
    </ligand>
</feature>
<feature type="binding site" evidence="1">
    <location>
        <position position="141"/>
    </location>
    <ligand>
        <name>Mg(2+)</name>
        <dbReference type="ChEBI" id="CHEBI:18420"/>
    </ligand>
</feature>
<feature type="binding site" evidence="1">
    <location>
        <begin position="148"/>
        <end position="150"/>
    </location>
    <ligand>
        <name>CTP</name>
        <dbReference type="ChEBI" id="CHEBI:37563"/>
        <note>allosteric inhibitor</note>
    </ligand>
</feature>
<feature type="binding site" evidence="1">
    <location>
        <begin position="188"/>
        <end position="193"/>
    </location>
    <ligand>
        <name>CTP</name>
        <dbReference type="ChEBI" id="CHEBI:37563"/>
        <note>allosteric inhibitor</note>
    </ligand>
</feature>
<feature type="binding site" evidence="1">
    <location>
        <begin position="188"/>
        <end position="193"/>
    </location>
    <ligand>
        <name>UTP</name>
        <dbReference type="ChEBI" id="CHEBI:46398"/>
    </ligand>
</feature>
<feature type="binding site" evidence="1">
    <location>
        <position position="224"/>
    </location>
    <ligand>
        <name>CTP</name>
        <dbReference type="ChEBI" id="CHEBI:37563"/>
        <note>allosteric inhibitor</note>
    </ligand>
</feature>
<feature type="binding site" evidence="1">
    <location>
        <position position="224"/>
    </location>
    <ligand>
        <name>UTP</name>
        <dbReference type="ChEBI" id="CHEBI:46398"/>
    </ligand>
</feature>
<feature type="binding site" evidence="1">
    <location>
        <position position="354"/>
    </location>
    <ligand>
        <name>L-glutamine</name>
        <dbReference type="ChEBI" id="CHEBI:58359"/>
    </ligand>
</feature>
<feature type="binding site" evidence="1">
    <location>
        <begin position="382"/>
        <end position="385"/>
    </location>
    <ligand>
        <name>L-glutamine</name>
        <dbReference type="ChEBI" id="CHEBI:58359"/>
    </ligand>
</feature>
<feature type="binding site" evidence="1">
    <location>
        <position position="405"/>
    </location>
    <ligand>
        <name>L-glutamine</name>
        <dbReference type="ChEBI" id="CHEBI:58359"/>
    </ligand>
</feature>
<feature type="binding site" evidence="1">
    <location>
        <position position="462"/>
    </location>
    <ligand>
        <name>L-glutamine</name>
        <dbReference type="ChEBI" id="CHEBI:58359"/>
    </ligand>
</feature>
<organism>
    <name type="scientific">Trichormus variabilis (strain ATCC 29413 / PCC 7937)</name>
    <name type="common">Anabaena variabilis</name>
    <dbReference type="NCBI Taxonomy" id="240292"/>
    <lineage>
        <taxon>Bacteria</taxon>
        <taxon>Bacillati</taxon>
        <taxon>Cyanobacteriota</taxon>
        <taxon>Cyanophyceae</taxon>
        <taxon>Nostocales</taxon>
        <taxon>Nostocaceae</taxon>
        <taxon>Trichormus</taxon>
    </lineage>
</organism>
<accession>Q3MAV1</accession>
<dbReference type="EC" id="6.3.4.2" evidence="1"/>
<dbReference type="EMBL" id="CP000117">
    <property type="protein sequence ID" value="ABA21885.1"/>
    <property type="molecule type" value="Genomic_DNA"/>
</dbReference>
<dbReference type="RefSeq" id="WP_010999126.1">
    <property type="nucleotide sequence ID" value="NC_007413.1"/>
</dbReference>
<dbReference type="SMR" id="Q3MAV1"/>
<dbReference type="STRING" id="240292.Ava_2267"/>
<dbReference type="MEROPS" id="C26.964"/>
<dbReference type="KEGG" id="ava:Ava_2267"/>
<dbReference type="eggNOG" id="COG0504">
    <property type="taxonomic scope" value="Bacteria"/>
</dbReference>
<dbReference type="HOGENOM" id="CLU_011675_5_0_3"/>
<dbReference type="UniPathway" id="UPA00159">
    <property type="reaction ID" value="UER00277"/>
</dbReference>
<dbReference type="Proteomes" id="UP000002533">
    <property type="component" value="Chromosome"/>
</dbReference>
<dbReference type="GO" id="GO:0005829">
    <property type="term" value="C:cytosol"/>
    <property type="evidence" value="ECO:0007669"/>
    <property type="project" value="TreeGrafter"/>
</dbReference>
<dbReference type="GO" id="GO:0005524">
    <property type="term" value="F:ATP binding"/>
    <property type="evidence" value="ECO:0007669"/>
    <property type="project" value="UniProtKB-KW"/>
</dbReference>
<dbReference type="GO" id="GO:0003883">
    <property type="term" value="F:CTP synthase activity"/>
    <property type="evidence" value="ECO:0007669"/>
    <property type="project" value="UniProtKB-UniRule"/>
</dbReference>
<dbReference type="GO" id="GO:0004359">
    <property type="term" value="F:glutaminase activity"/>
    <property type="evidence" value="ECO:0007669"/>
    <property type="project" value="RHEA"/>
</dbReference>
<dbReference type="GO" id="GO:0042802">
    <property type="term" value="F:identical protein binding"/>
    <property type="evidence" value="ECO:0007669"/>
    <property type="project" value="TreeGrafter"/>
</dbReference>
<dbReference type="GO" id="GO:0046872">
    <property type="term" value="F:metal ion binding"/>
    <property type="evidence" value="ECO:0007669"/>
    <property type="project" value="UniProtKB-KW"/>
</dbReference>
<dbReference type="GO" id="GO:0044210">
    <property type="term" value="P:'de novo' CTP biosynthetic process"/>
    <property type="evidence" value="ECO:0007669"/>
    <property type="project" value="UniProtKB-UniRule"/>
</dbReference>
<dbReference type="GO" id="GO:0019856">
    <property type="term" value="P:pyrimidine nucleobase biosynthetic process"/>
    <property type="evidence" value="ECO:0007669"/>
    <property type="project" value="TreeGrafter"/>
</dbReference>
<dbReference type="CDD" id="cd03113">
    <property type="entry name" value="CTPS_N"/>
    <property type="match status" value="1"/>
</dbReference>
<dbReference type="CDD" id="cd01746">
    <property type="entry name" value="GATase1_CTP_Synthase"/>
    <property type="match status" value="1"/>
</dbReference>
<dbReference type="FunFam" id="3.40.50.300:FF:000009">
    <property type="entry name" value="CTP synthase"/>
    <property type="match status" value="1"/>
</dbReference>
<dbReference type="FunFam" id="3.40.50.880:FF:000002">
    <property type="entry name" value="CTP synthase"/>
    <property type="match status" value="1"/>
</dbReference>
<dbReference type="Gene3D" id="3.40.50.880">
    <property type="match status" value="1"/>
</dbReference>
<dbReference type="Gene3D" id="3.40.50.300">
    <property type="entry name" value="P-loop containing nucleotide triphosphate hydrolases"/>
    <property type="match status" value="1"/>
</dbReference>
<dbReference type="HAMAP" id="MF_01227">
    <property type="entry name" value="PyrG"/>
    <property type="match status" value="1"/>
</dbReference>
<dbReference type="InterPro" id="IPR029062">
    <property type="entry name" value="Class_I_gatase-like"/>
</dbReference>
<dbReference type="InterPro" id="IPR004468">
    <property type="entry name" value="CTP_synthase"/>
</dbReference>
<dbReference type="InterPro" id="IPR017456">
    <property type="entry name" value="CTP_synthase_N"/>
</dbReference>
<dbReference type="InterPro" id="IPR017926">
    <property type="entry name" value="GATASE"/>
</dbReference>
<dbReference type="InterPro" id="IPR033828">
    <property type="entry name" value="GATase1_CTP_Synthase"/>
</dbReference>
<dbReference type="InterPro" id="IPR027417">
    <property type="entry name" value="P-loop_NTPase"/>
</dbReference>
<dbReference type="NCBIfam" id="NF003792">
    <property type="entry name" value="PRK05380.1"/>
    <property type="match status" value="1"/>
</dbReference>
<dbReference type="NCBIfam" id="TIGR00337">
    <property type="entry name" value="PyrG"/>
    <property type="match status" value="1"/>
</dbReference>
<dbReference type="PANTHER" id="PTHR11550">
    <property type="entry name" value="CTP SYNTHASE"/>
    <property type="match status" value="1"/>
</dbReference>
<dbReference type="PANTHER" id="PTHR11550:SF0">
    <property type="entry name" value="CTP SYNTHASE-RELATED"/>
    <property type="match status" value="1"/>
</dbReference>
<dbReference type="Pfam" id="PF06418">
    <property type="entry name" value="CTP_synth_N"/>
    <property type="match status" value="1"/>
</dbReference>
<dbReference type="Pfam" id="PF00117">
    <property type="entry name" value="GATase"/>
    <property type="match status" value="1"/>
</dbReference>
<dbReference type="SUPFAM" id="SSF52317">
    <property type="entry name" value="Class I glutamine amidotransferase-like"/>
    <property type="match status" value="1"/>
</dbReference>
<dbReference type="SUPFAM" id="SSF52540">
    <property type="entry name" value="P-loop containing nucleoside triphosphate hydrolases"/>
    <property type="match status" value="1"/>
</dbReference>
<dbReference type="PROSITE" id="PS51273">
    <property type="entry name" value="GATASE_TYPE_1"/>
    <property type="match status" value="1"/>
</dbReference>
<keyword id="KW-0067">ATP-binding</keyword>
<keyword id="KW-0315">Glutamine amidotransferase</keyword>
<keyword id="KW-0436">Ligase</keyword>
<keyword id="KW-0460">Magnesium</keyword>
<keyword id="KW-0479">Metal-binding</keyword>
<keyword id="KW-0547">Nucleotide-binding</keyword>
<keyword id="KW-0665">Pyrimidine biosynthesis</keyword>
<sequence length="545" mass="60341">MTKFIFVTGGVVSSIGKGIVAASLGRLLKSRDYSVSILKLDPYINIDPGTMSPFQHGEVFVTQDGAETDLDLGHYERFTDTSMSRLNSVTTGSIYQAVIMRERRGDYNGGTVQVIPHITNEIKERILSVAKETNPSVVITEIGGTVGDIESLPFLEAIRQLRKQVGRQNVLYMHVTLMPYIASAGEMKTKPTQHSVKELRSIGIQPDILVCRSDRPIPRGLKQKLSEFCDVPVECVITSQDARSIYEVPLILEGEGLAEQTLKLLQMEQRQPNLEKWQAMVQGLYSPKHTVEIAIVGKYVSLGDAYLSVVEALRHAAIATQGDLQLRWINSEDLETQAPETYLAGVDGIVVPGGFGTRGVDGKIAAIKYARDRQIPFLGLCLGMQCSVIEWARNVGGLAGANSAEFDSTTKYPVINLLPEQQDVVDLGGTMRLGVYPCHILPNTLASKLYQAEIIQERHRHRYEFNNDYRQLLLDSGYVISGTSPDGRLVEIVEYPQHPFFISCQFHPEFQSRPNTPHPLFTGFVQAAIAQSHPTANFQTPVKVS</sequence>
<name>PYRG_TRIV2</name>
<gene>
    <name evidence="1" type="primary">pyrG</name>
    <name type="ordered locus">Ava_2267</name>
</gene>
<proteinExistence type="inferred from homology"/>
<protein>
    <recommendedName>
        <fullName evidence="1">CTP synthase</fullName>
        <ecNumber evidence="1">6.3.4.2</ecNumber>
    </recommendedName>
    <alternativeName>
        <fullName evidence="1">Cytidine 5'-triphosphate synthase</fullName>
    </alternativeName>
    <alternativeName>
        <fullName evidence="1">Cytidine triphosphate synthetase</fullName>
        <shortName evidence="1">CTP synthetase</shortName>
        <shortName evidence="1">CTPS</shortName>
    </alternativeName>
    <alternativeName>
        <fullName evidence="1">UTP--ammonia ligase</fullName>
    </alternativeName>
</protein>